<sequence length="1264" mass="139624">MSGSKGVSPPGYAAQTAAAPASRGGPEHRSAWGEADSRANGYPHAPGGSARGSTKKPGGAVTPQQQQQQQRLASRWRGDDDDEPPLSGDDPLAGGFGFSFRSKSAWQERGGDDCGRGSRRQRRGAAGGGSTRAPPAGGGCGGGSAAAAAAAGGTEVRPRSVELGLEERRGKGRAVDELEAGAVEGGEGAEDGGSSADSSNGPGAVLSLGACCLALLQIFRSKKFPSDKLERLYQRYFFRLNQSSLTMLMAVLVLVCLVMLAFHAARPPLQLPYLAVLAAAVGVILVMAVLCNRAAFHQDHMGLACYALIAVVLAVQVVGLLLPQPRSASEGIWWTVFFIYTIYTLLPVRMRAAVLSGVLLSTLHLAIALRTNAQDRFLLKQLVSNVLIFSCTNIVGVCTHYPAEVSQRQAFQETRECIQARLHSQRENQQQERLLLSVLPRHVAMEMKADINAKQEDMMFHKIYIQKHDNVSILFADIEGFTSLASQCTAQELVMTLNELFARFDKLAAENHCLRIKILGDCYYCVSGLPEARADHAHCCVEMGMDMIEAISLVREVTGVNVNMRVGIHSGRVHCGVLGLRKWQFDVWSNDVTLANHMEAGGKAGRIHITKATLNYLNGDYEVEPGCGGERNAYLKEHSIETFLILRCTQKRKEEKAMIAKMNRQRTNSIGHNPPHWGAERPFYNHLGGNQVSKEMKRMGFEDPKDKNAQESTNPEDEVDEFLGRAIDARSIDRLRSEHVRRFLLTFREPDLEKKYSKQVDDRFGAYVACASLVFLFICCVQITIVPHSMFMLSFYLACFLLLTLVVFVSMIYSCVKLFPRPLQSLSRKIVRSKMNSTLVGVFTITLVFLSAFVNMFMCNSKDLLDCLAAEHNISVIHVNACHVVESAFNYSLGNEQGFCGNSRPNCNFPEYFTYSVLLSLLACSVFLQISCIGKLVLMLAIELTYVLIVEVPRVTLFDNADLLVTANAIDISSNGTSQCPEHATKVALKVVTPIIISVFVLALYLHAQQVESTARLDFLWKLQATEEKEEMEELQAYNRRLLHNILPKDVAAHFLARERRNDELYYQSCECVAVMFASIANFSEFYVELEANNEGVECLRLLNEIIADFDEIISEDRFRQLEKIKTIGSTYMAASGLNDSTYDKVGKTHIKALADFAMKLMDQMKYINEHSFNNFQMKIGLNIGPVVAGVIGARKPQYDIWGNTVNVASRMDSTGVPDRIQVTTDMYQVLAANTYQLECRGVVKVKGKGEMMTYFLNGGPPLS</sequence>
<accession>P40144</accession>
<keyword id="KW-0067">ATP-binding</keyword>
<keyword id="KW-0115">cAMP biosynthesis</keyword>
<keyword id="KW-1003">Cell membrane</keyword>
<keyword id="KW-0966">Cell projection</keyword>
<keyword id="KW-0969">Cilium</keyword>
<keyword id="KW-0903">Direct protein sequencing</keyword>
<keyword id="KW-0325">Glycoprotein</keyword>
<keyword id="KW-0456">Lyase</keyword>
<keyword id="KW-0460">Magnesium</keyword>
<keyword id="KW-0472">Membrane</keyword>
<keyword id="KW-0479">Metal-binding</keyword>
<keyword id="KW-0488">Methylation</keyword>
<keyword id="KW-0547">Nucleotide-binding</keyword>
<keyword id="KW-0597">Phosphoprotein</keyword>
<keyword id="KW-1185">Reference proteome</keyword>
<keyword id="KW-0677">Repeat</keyword>
<keyword id="KW-0812">Transmembrane</keyword>
<keyword id="KW-1133">Transmembrane helix</keyword>
<proteinExistence type="evidence at protein level"/>
<protein>
    <recommendedName>
        <fullName>Adenylate cyclase type 5</fullName>
        <ecNumber evidence="3">4.6.1.1</ecNumber>
    </recommendedName>
    <alternativeName>
        <fullName>ATP pyrophosphate-lyase 5</fullName>
    </alternativeName>
    <alternativeName>
        <fullName>Adenylate cyclase type V</fullName>
    </alternativeName>
    <alternativeName>
        <fullName>Adenylyl cyclase 5</fullName>
    </alternativeName>
</protein>
<gene>
    <name type="primary">ADCY5</name>
</gene>
<evidence type="ECO:0000250" key="1"/>
<evidence type="ECO:0000250" key="2">
    <source>
        <dbReference type="UniProtKB" id="O43306"/>
    </source>
</evidence>
<evidence type="ECO:0000250" key="3">
    <source>
        <dbReference type="UniProtKB" id="O95622"/>
    </source>
</evidence>
<evidence type="ECO:0000250" key="4">
    <source>
        <dbReference type="UniProtKB" id="P26769"/>
    </source>
</evidence>
<evidence type="ECO:0000250" key="5">
    <source>
        <dbReference type="UniProtKB" id="P30803"/>
    </source>
</evidence>
<evidence type="ECO:0000250" key="6">
    <source>
        <dbReference type="UniProtKB" id="P84309"/>
    </source>
</evidence>
<evidence type="ECO:0000250" key="7">
    <source>
        <dbReference type="UniProtKB" id="Q03343"/>
    </source>
</evidence>
<evidence type="ECO:0000255" key="8"/>
<evidence type="ECO:0000255" key="9">
    <source>
        <dbReference type="PROSITE-ProRule" id="PRU00099"/>
    </source>
</evidence>
<evidence type="ECO:0000256" key="10">
    <source>
        <dbReference type="SAM" id="MobiDB-lite"/>
    </source>
</evidence>
<evidence type="ECO:0000269" key="11">
    <source>
    </source>
</evidence>
<name>ADCY5_RABIT</name>
<reference key="1">
    <citation type="journal article" date="1994" name="FEBS Lett.">
        <title>Molecular cloning and expression of a novel type V adenylyl cyclase from rabbit myocardium.</title>
        <authorList>
            <person name="Wallach J."/>
            <person name="Droste M."/>
            <person name="Kluxen F.-W."/>
            <person name="Pfeuffer T."/>
            <person name="Frank R."/>
        </authorList>
    </citation>
    <scope>NUCLEOTIDE SEQUENCE [MRNA]</scope>
    <scope>PARTIAL PROTEIN SEQUENCE</scope>
    <scope>TISSUE SPECIFICITY</scope>
    <source>
        <tissue>Myocardium</tissue>
    </source>
</reference>
<feature type="chain" id="PRO_0000195696" description="Adenylate cyclase type 5">
    <location>
        <begin position="1"/>
        <end position="1264"/>
    </location>
</feature>
<feature type="topological domain" description="Cytoplasmic" evidence="8">
    <location>
        <begin position="1"/>
        <end position="244"/>
    </location>
</feature>
<feature type="transmembrane region" description="Helical" evidence="8">
    <location>
        <begin position="245"/>
        <end position="265"/>
    </location>
</feature>
<feature type="transmembrane region" description="Helical" evidence="8">
    <location>
        <begin position="271"/>
        <end position="290"/>
    </location>
</feature>
<feature type="transmembrane region" description="Helical" evidence="8">
    <location>
        <begin position="301"/>
        <end position="322"/>
    </location>
</feature>
<feature type="transmembrane region" description="Helical" evidence="8">
    <location>
        <begin position="331"/>
        <end position="348"/>
    </location>
</feature>
<feature type="transmembrane region" description="Helical" evidence="8">
    <location>
        <begin position="351"/>
        <end position="369"/>
    </location>
</feature>
<feature type="transmembrane region" description="Helical" evidence="8">
    <location>
        <begin position="377"/>
        <end position="398"/>
    </location>
</feature>
<feature type="topological domain" description="Cytoplasmic" evidence="8">
    <location>
        <begin position="399"/>
        <end position="765"/>
    </location>
</feature>
<feature type="transmembrane region" description="Helical" evidence="8">
    <location>
        <begin position="766"/>
        <end position="786"/>
    </location>
</feature>
<feature type="transmembrane region" description="Helical" evidence="8">
    <location>
        <begin position="797"/>
        <end position="816"/>
    </location>
</feature>
<feature type="transmembrane region" description="Helical" evidence="8">
    <location>
        <begin position="839"/>
        <end position="859"/>
    </location>
</feature>
<feature type="topological domain" description="Extracellular" evidence="8">
    <location>
        <begin position="860"/>
        <end position="912"/>
    </location>
</feature>
<feature type="transmembrane region" description="Helical" evidence="8">
    <location>
        <begin position="913"/>
        <end position="933"/>
    </location>
</feature>
<feature type="transmembrane region" description="Helical" evidence="8">
    <location>
        <begin position="938"/>
        <end position="958"/>
    </location>
</feature>
<feature type="transmembrane region" description="Helical" evidence="8">
    <location>
        <begin position="987"/>
        <end position="1006"/>
    </location>
</feature>
<feature type="topological domain" description="Cytoplasmic" evidence="8">
    <location>
        <begin position="1007"/>
        <end position="1264"/>
    </location>
</feature>
<feature type="domain" description="Guanylate cyclase 1" evidence="9">
    <location>
        <begin position="472"/>
        <end position="599"/>
    </location>
</feature>
<feature type="domain" description="Guanylate cyclase 2" evidence="9">
    <location>
        <begin position="1074"/>
        <end position="1213"/>
    </location>
</feature>
<feature type="region of interest" description="Disordered" evidence="10">
    <location>
        <begin position="1"/>
        <end position="198"/>
    </location>
</feature>
<feature type="compositionally biased region" description="Basic and acidic residues" evidence="10">
    <location>
        <begin position="25"/>
        <end position="37"/>
    </location>
</feature>
<feature type="compositionally biased region" description="Gly residues" evidence="10">
    <location>
        <begin position="125"/>
        <end position="144"/>
    </location>
</feature>
<feature type="compositionally biased region" description="Basic and acidic residues" evidence="10">
    <location>
        <begin position="156"/>
        <end position="176"/>
    </location>
</feature>
<feature type="binding site" evidence="5">
    <location>
        <begin position="477"/>
        <end position="482"/>
    </location>
    <ligand>
        <name>ATP</name>
        <dbReference type="ChEBI" id="CHEBI:30616"/>
    </ligand>
</feature>
<feature type="binding site" evidence="9">
    <location>
        <position position="477"/>
    </location>
    <ligand>
        <name>Mg(2+)</name>
        <dbReference type="ChEBI" id="CHEBI:18420"/>
        <label>1</label>
        <note>catalytic</note>
    </ligand>
</feature>
<feature type="binding site" evidence="9">
    <location>
        <position position="477"/>
    </location>
    <ligand>
        <name>Mg(2+)</name>
        <dbReference type="ChEBI" id="CHEBI:18420"/>
        <label>2</label>
        <note>catalytic</note>
    </ligand>
</feature>
<feature type="binding site" evidence="9">
    <location>
        <position position="478"/>
    </location>
    <ligand>
        <name>Mg(2+)</name>
        <dbReference type="ChEBI" id="CHEBI:18420"/>
        <label>2</label>
        <note>catalytic</note>
    </ligand>
</feature>
<feature type="binding site" evidence="5">
    <location>
        <begin position="519"/>
        <end position="521"/>
    </location>
    <ligand>
        <name>ATP</name>
        <dbReference type="ChEBI" id="CHEBI:30616"/>
    </ligand>
</feature>
<feature type="binding site" evidence="9">
    <location>
        <position position="521"/>
    </location>
    <ligand>
        <name>Mg(2+)</name>
        <dbReference type="ChEBI" id="CHEBI:18420"/>
        <label>1</label>
        <note>catalytic</note>
    </ligand>
</feature>
<feature type="binding site" evidence="9">
    <location>
        <position position="521"/>
    </location>
    <ligand>
        <name>Mg(2+)</name>
        <dbReference type="ChEBI" id="CHEBI:18420"/>
        <label>2</label>
        <note>catalytic</note>
    </ligand>
</feature>
<feature type="binding site" evidence="5">
    <location>
        <position position="565"/>
    </location>
    <ligand>
        <name>ATP</name>
        <dbReference type="ChEBI" id="CHEBI:30616"/>
    </ligand>
</feature>
<feature type="binding site" evidence="4">
    <location>
        <position position="1126"/>
    </location>
    <ligand>
        <name>ATP</name>
        <dbReference type="ChEBI" id="CHEBI:30616"/>
    </ligand>
</feature>
<feature type="binding site" evidence="4">
    <location>
        <begin position="1200"/>
        <end position="1202"/>
    </location>
    <ligand>
        <name>ATP</name>
        <dbReference type="ChEBI" id="CHEBI:30616"/>
    </ligand>
</feature>
<feature type="binding site" evidence="4">
    <location>
        <begin position="1207"/>
        <end position="1211"/>
    </location>
    <ligand>
        <name>ATP</name>
        <dbReference type="ChEBI" id="CHEBI:30616"/>
    </ligand>
</feature>
<feature type="binding site" evidence="4">
    <location>
        <position position="1247"/>
    </location>
    <ligand>
        <name>ATP</name>
        <dbReference type="ChEBI" id="CHEBI:30616"/>
    </ligand>
</feature>
<feature type="modified residue" description="Omega-N-methylarginine" evidence="6">
    <location>
        <position position="23"/>
    </location>
</feature>
<feature type="modified residue" description="Phosphoserine" evidence="6">
    <location>
        <position position="99"/>
    </location>
</feature>
<feature type="modified residue" description="Phosphoserine" evidence="6">
    <location>
        <position position="160"/>
    </location>
</feature>
<feature type="modified residue" description="Phosphoserine" evidence="2">
    <location>
        <position position="669"/>
    </location>
</feature>
<feature type="modified residue" description="Phosphoserine" evidence="7">
    <location>
        <position position="757"/>
    </location>
</feature>
<feature type="modified residue" description="Phosphothreonine" evidence="7">
    <location>
        <position position="1014"/>
    </location>
</feature>
<feature type="glycosylation site" description="N-linked (GlcNAc...) asparagine" evidence="8">
    <location>
        <position position="873"/>
    </location>
</feature>
<feature type="glycosylation site" description="N-linked (GlcNAc...) asparagine" evidence="8">
    <location>
        <position position="890"/>
    </location>
</feature>
<feature type="glycosylation site" description="N-linked (GlcNAc...) asparagine" evidence="8">
    <location>
        <position position="975"/>
    </location>
</feature>
<comment type="function">
    <text evidence="3">Catalyzes the formation of the signaling molecule cAMP in response to G-protein signaling. Mediates signaling downstream of ADRB1. Regulates the increase of free cytosolic Ca(2+) in response to increased blood glucose levels and contributes to the regulation of Ca(2+)-dependent insulin secretion.</text>
</comment>
<comment type="catalytic activity">
    <reaction evidence="3">
        <text>ATP = 3',5'-cyclic AMP + diphosphate</text>
        <dbReference type="Rhea" id="RHEA:15389"/>
        <dbReference type="ChEBI" id="CHEBI:30616"/>
        <dbReference type="ChEBI" id="CHEBI:33019"/>
        <dbReference type="ChEBI" id="CHEBI:58165"/>
        <dbReference type="EC" id="4.6.1.1"/>
    </reaction>
</comment>
<comment type="cofactor">
    <cofactor evidence="5">
        <name>Mg(2+)</name>
        <dbReference type="ChEBI" id="CHEBI:18420"/>
    </cofactor>
    <cofactor evidence="5">
        <name>Mn(2+)</name>
        <dbReference type="ChEBI" id="CHEBI:29035"/>
    </cofactor>
    <text evidence="5">Binds 2 magnesium ions per subunit. Is also active with manganese (in vitro).</text>
</comment>
<comment type="activity regulation">
    <text evidence="3 5">Activated by G(s) G alpha protein GNAS (By similarity). Inhibited by G(i) G alpha protein GNAI1 (By similarity). Activity is further increased by interaction with the G-protein beta and gamma subunit complex formed by GNB1 and GNG2 (By similarity). Activated by forskolin (By similarity). Is not activated by calmodulin. Inhibited by adenosine and ATP analogs (By similarity). Inhibited by calcium ions, already at micromolar concentrations (By similarity). Phosphorylation by RAF1 results in its activation (By similarity).</text>
</comment>
<comment type="subunit">
    <text evidence="3 6">Interacts with GNAS, GNB1 and GNG2 (By similarity). Part of a complex containing AKAP5, ADCY6, PDE4C and PKD2 (By similarity). Interacts with RAF1 (By similarity).</text>
</comment>
<comment type="subcellular location">
    <subcellularLocation>
        <location evidence="5">Cell membrane</location>
        <topology evidence="5">Multi-pass membrane protein</topology>
    </subcellularLocation>
    <subcellularLocation>
        <location evidence="6">Cell projection</location>
        <location evidence="6">Cilium</location>
    </subcellularLocation>
</comment>
<comment type="tissue specificity">
    <text evidence="11">Myocardial tissue.</text>
</comment>
<comment type="domain">
    <text evidence="5">The protein contains two modules with six transmembrane helices each; both are required for catalytic activity. Isolated N-terminal or C-terminal guanylate cyclase domains have no catalytic activity, but when they are brought together, enzyme activity is restored. The active site is at the interface of the two domains. Both contribute substrate-binding residues, but the catalytic metal ions are bound exclusively via the N-terminal guanylate cyclase domain.</text>
</comment>
<comment type="PTM">
    <text evidence="11">The N-terminus is blocked.</text>
</comment>
<comment type="PTM">
    <text evidence="1">Phosphorylated by RAF1.</text>
</comment>
<comment type="similarity">
    <text evidence="9">Belongs to the adenylyl cyclase class-4/guanylyl cyclase family.</text>
</comment>
<organism>
    <name type="scientific">Oryctolagus cuniculus</name>
    <name type="common">Rabbit</name>
    <dbReference type="NCBI Taxonomy" id="9986"/>
    <lineage>
        <taxon>Eukaryota</taxon>
        <taxon>Metazoa</taxon>
        <taxon>Chordata</taxon>
        <taxon>Craniata</taxon>
        <taxon>Vertebrata</taxon>
        <taxon>Euteleostomi</taxon>
        <taxon>Mammalia</taxon>
        <taxon>Eutheria</taxon>
        <taxon>Euarchontoglires</taxon>
        <taxon>Glires</taxon>
        <taxon>Lagomorpha</taxon>
        <taxon>Leporidae</taxon>
        <taxon>Oryctolagus</taxon>
    </lineage>
</organism>
<dbReference type="EC" id="4.6.1.1" evidence="3"/>
<dbReference type="EMBL" id="Z29371">
    <property type="protein sequence ID" value="CAA82562.1"/>
    <property type="molecule type" value="mRNA"/>
</dbReference>
<dbReference type="PIR" id="S41603">
    <property type="entry name" value="S41603"/>
</dbReference>
<dbReference type="RefSeq" id="NP_001076097.1">
    <property type="nucleotide sequence ID" value="NM_001082628.1"/>
</dbReference>
<dbReference type="SMR" id="P40144"/>
<dbReference type="FunCoup" id="P40144">
    <property type="interactions" value="60"/>
</dbReference>
<dbReference type="STRING" id="9986.ENSOCUP00000013017"/>
<dbReference type="GlyCosmos" id="P40144">
    <property type="glycosylation" value="3 sites, No reported glycans"/>
</dbReference>
<dbReference type="PaxDb" id="9986-ENSOCUP00000013017"/>
<dbReference type="GeneID" id="100009315"/>
<dbReference type="KEGG" id="ocu:100009315"/>
<dbReference type="CTD" id="111"/>
<dbReference type="eggNOG" id="KOG3619">
    <property type="taxonomic scope" value="Eukaryota"/>
</dbReference>
<dbReference type="InParanoid" id="P40144"/>
<dbReference type="OrthoDB" id="10261550at2759"/>
<dbReference type="Proteomes" id="UP000001811">
    <property type="component" value="Unplaced"/>
</dbReference>
<dbReference type="GO" id="GO:0005929">
    <property type="term" value="C:cilium"/>
    <property type="evidence" value="ECO:0000250"/>
    <property type="project" value="UniProtKB"/>
</dbReference>
<dbReference type="GO" id="GO:0016020">
    <property type="term" value="C:membrane"/>
    <property type="evidence" value="ECO:0000250"/>
    <property type="project" value="UniProtKB"/>
</dbReference>
<dbReference type="GO" id="GO:0005886">
    <property type="term" value="C:plasma membrane"/>
    <property type="evidence" value="ECO:0007669"/>
    <property type="project" value="UniProtKB-SubCell"/>
</dbReference>
<dbReference type="GO" id="GO:0004016">
    <property type="term" value="F:adenylate cyclase activity"/>
    <property type="evidence" value="ECO:0000250"/>
    <property type="project" value="UniProtKB"/>
</dbReference>
<dbReference type="GO" id="GO:0005524">
    <property type="term" value="F:ATP binding"/>
    <property type="evidence" value="ECO:0007669"/>
    <property type="project" value="UniProtKB-KW"/>
</dbReference>
<dbReference type="GO" id="GO:0046872">
    <property type="term" value="F:metal ion binding"/>
    <property type="evidence" value="ECO:0007669"/>
    <property type="project" value="UniProtKB-KW"/>
</dbReference>
<dbReference type="GO" id="GO:0007189">
    <property type="term" value="P:adenylate cyclase-activating G protein-coupled receptor signaling pathway"/>
    <property type="evidence" value="ECO:0000250"/>
    <property type="project" value="UniProtKB"/>
</dbReference>
<dbReference type="GO" id="GO:0006171">
    <property type="term" value="P:cAMP biosynthetic process"/>
    <property type="evidence" value="ECO:0000250"/>
    <property type="project" value="UniProtKB"/>
</dbReference>
<dbReference type="GO" id="GO:1904322">
    <property type="term" value="P:cellular response to forskolin"/>
    <property type="evidence" value="ECO:0000250"/>
    <property type="project" value="UniProtKB"/>
</dbReference>
<dbReference type="GO" id="GO:0035556">
    <property type="term" value="P:intracellular signal transduction"/>
    <property type="evidence" value="ECO:0007669"/>
    <property type="project" value="InterPro"/>
</dbReference>
<dbReference type="GO" id="GO:0007204">
    <property type="term" value="P:positive regulation of cytosolic calcium ion concentration"/>
    <property type="evidence" value="ECO:0000250"/>
    <property type="project" value="UniProtKB"/>
</dbReference>
<dbReference type="GO" id="GO:0061178">
    <property type="term" value="P:regulation of insulin secretion involved in cellular response to glucose stimulus"/>
    <property type="evidence" value="ECO:0000250"/>
    <property type="project" value="UniProtKB"/>
</dbReference>
<dbReference type="CDD" id="cd07302">
    <property type="entry name" value="CHD"/>
    <property type="match status" value="1"/>
</dbReference>
<dbReference type="CDD" id="cd07556">
    <property type="entry name" value="Nucleotidyl_cyc_III"/>
    <property type="match status" value="1"/>
</dbReference>
<dbReference type="FunFam" id="3.30.70.1230:FF:000001">
    <property type="entry name" value="Adenylate cyclase"/>
    <property type="match status" value="1"/>
</dbReference>
<dbReference type="FunFam" id="3.30.70.1230:FF:000002">
    <property type="entry name" value="Adenylate cyclase"/>
    <property type="match status" value="1"/>
</dbReference>
<dbReference type="Gene3D" id="3.30.70.1230">
    <property type="entry name" value="Nucleotide cyclase"/>
    <property type="match status" value="2"/>
</dbReference>
<dbReference type="InterPro" id="IPR001054">
    <property type="entry name" value="A/G_cyclase"/>
</dbReference>
<dbReference type="InterPro" id="IPR018297">
    <property type="entry name" value="A/G_cyclase_CS"/>
</dbReference>
<dbReference type="InterPro" id="IPR032628">
    <property type="entry name" value="AC_N"/>
</dbReference>
<dbReference type="InterPro" id="IPR030672">
    <property type="entry name" value="Adcy"/>
</dbReference>
<dbReference type="InterPro" id="IPR009398">
    <property type="entry name" value="Adcy_conserved_dom"/>
</dbReference>
<dbReference type="InterPro" id="IPR029787">
    <property type="entry name" value="Nucleotide_cyclase"/>
</dbReference>
<dbReference type="PANTHER" id="PTHR45627">
    <property type="entry name" value="ADENYLATE CYCLASE TYPE 1"/>
    <property type="match status" value="1"/>
</dbReference>
<dbReference type="PANTHER" id="PTHR45627:SF7">
    <property type="entry name" value="ADENYLATE CYCLASE TYPE 5"/>
    <property type="match status" value="1"/>
</dbReference>
<dbReference type="Pfam" id="PF16214">
    <property type="entry name" value="AC_N"/>
    <property type="match status" value="1"/>
</dbReference>
<dbReference type="Pfam" id="PF06327">
    <property type="entry name" value="Adcy_cons_dom"/>
    <property type="match status" value="1"/>
</dbReference>
<dbReference type="Pfam" id="PF00211">
    <property type="entry name" value="Guanylate_cyc"/>
    <property type="match status" value="2"/>
</dbReference>
<dbReference type="PIRSF" id="PIRSF039050">
    <property type="entry name" value="Ade_cyc"/>
    <property type="match status" value="1"/>
</dbReference>
<dbReference type="SMART" id="SM00044">
    <property type="entry name" value="CYCc"/>
    <property type="match status" value="2"/>
</dbReference>
<dbReference type="SUPFAM" id="SSF55073">
    <property type="entry name" value="Nucleotide cyclase"/>
    <property type="match status" value="2"/>
</dbReference>
<dbReference type="PROSITE" id="PS00452">
    <property type="entry name" value="GUANYLATE_CYCLASE_1"/>
    <property type="match status" value="2"/>
</dbReference>
<dbReference type="PROSITE" id="PS50125">
    <property type="entry name" value="GUANYLATE_CYCLASE_2"/>
    <property type="match status" value="2"/>
</dbReference>